<evidence type="ECO:0000255" key="1">
    <source>
        <dbReference type="HAMAP-Rule" id="MF_00116"/>
    </source>
</evidence>
<evidence type="ECO:0000256" key="2">
    <source>
        <dbReference type="SAM" id="MobiDB-lite"/>
    </source>
</evidence>
<proteinExistence type="inferred from homology"/>
<keyword id="KW-0378">Hydrolase</keyword>
<keyword id="KW-0460">Magnesium</keyword>
<keyword id="KW-0479">Metal-binding</keyword>
<keyword id="KW-0546">Nucleotide metabolism</keyword>
<name>DUT_BARHE</name>
<organism>
    <name type="scientific">Bartonella henselae (strain ATCC 49882 / DSM 28221 / CCUG 30454 / Houston 1)</name>
    <name type="common">Rochalimaea henselae</name>
    <dbReference type="NCBI Taxonomy" id="283166"/>
    <lineage>
        <taxon>Bacteria</taxon>
        <taxon>Pseudomonadati</taxon>
        <taxon>Pseudomonadota</taxon>
        <taxon>Alphaproteobacteria</taxon>
        <taxon>Hyphomicrobiales</taxon>
        <taxon>Bartonellaceae</taxon>
        <taxon>Bartonella</taxon>
    </lineage>
</organism>
<comment type="function">
    <text evidence="1">This enzyme is involved in nucleotide metabolism: it produces dUMP, the immediate precursor of thymidine nucleotides and it decreases the intracellular concentration of dUTP so that uracil cannot be incorporated into DNA.</text>
</comment>
<comment type="catalytic activity">
    <reaction evidence="1">
        <text>dUTP + H2O = dUMP + diphosphate + H(+)</text>
        <dbReference type="Rhea" id="RHEA:10248"/>
        <dbReference type="ChEBI" id="CHEBI:15377"/>
        <dbReference type="ChEBI" id="CHEBI:15378"/>
        <dbReference type="ChEBI" id="CHEBI:33019"/>
        <dbReference type="ChEBI" id="CHEBI:61555"/>
        <dbReference type="ChEBI" id="CHEBI:246422"/>
        <dbReference type="EC" id="3.6.1.23"/>
    </reaction>
</comment>
<comment type="cofactor">
    <cofactor evidence="1">
        <name>Mg(2+)</name>
        <dbReference type="ChEBI" id="CHEBI:18420"/>
    </cofactor>
</comment>
<comment type="pathway">
    <text evidence="1">Pyrimidine metabolism; dUMP biosynthesis; dUMP from dCTP (dUTP route): step 2/2.</text>
</comment>
<comment type="similarity">
    <text evidence="1">Belongs to the dUTPase family.</text>
</comment>
<dbReference type="EC" id="3.6.1.23" evidence="1"/>
<dbReference type="EMBL" id="BX897699">
    <property type="protein sequence ID" value="CAF28232.1"/>
    <property type="molecule type" value="Genomic_DNA"/>
</dbReference>
<dbReference type="RefSeq" id="WP_011181240.1">
    <property type="nucleotide sequence ID" value="NC_005956.1"/>
</dbReference>
<dbReference type="SMR" id="Q6G202"/>
<dbReference type="PaxDb" id="283166-BH14690"/>
<dbReference type="EnsemblBacteria" id="CAF28232">
    <property type="protein sequence ID" value="CAF28232"/>
    <property type="gene ID" value="BH14690"/>
</dbReference>
<dbReference type="GeneID" id="92986081"/>
<dbReference type="KEGG" id="bhe:BH14690"/>
<dbReference type="eggNOG" id="COG0756">
    <property type="taxonomic scope" value="Bacteria"/>
</dbReference>
<dbReference type="OrthoDB" id="9809956at2"/>
<dbReference type="UniPathway" id="UPA00610">
    <property type="reaction ID" value="UER00666"/>
</dbReference>
<dbReference type="Proteomes" id="UP000000421">
    <property type="component" value="Chromosome"/>
</dbReference>
<dbReference type="GO" id="GO:0004170">
    <property type="term" value="F:dUTP diphosphatase activity"/>
    <property type="evidence" value="ECO:0007669"/>
    <property type="project" value="UniProtKB-UniRule"/>
</dbReference>
<dbReference type="GO" id="GO:0000287">
    <property type="term" value="F:magnesium ion binding"/>
    <property type="evidence" value="ECO:0007669"/>
    <property type="project" value="UniProtKB-UniRule"/>
</dbReference>
<dbReference type="GO" id="GO:0006226">
    <property type="term" value="P:dUMP biosynthetic process"/>
    <property type="evidence" value="ECO:0007669"/>
    <property type="project" value="UniProtKB-UniRule"/>
</dbReference>
<dbReference type="GO" id="GO:0046081">
    <property type="term" value="P:dUTP catabolic process"/>
    <property type="evidence" value="ECO:0007669"/>
    <property type="project" value="InterPro"/>
</dbReference>
<dbReference type="CDD" id="cd07557">
    <property type="entry name" value="trimeric_dUTPase"/>
    <property type="match status" value="1"/>
</dbReference>
<dbReference type="Gene3D" id="2.70.40.10">
    <property type="match status" value="1"/>
</dbReference>
<dbReference type="HAMAP" id="MF_00116">
    <property type="entry name" value="dUTPase_bact"/>
    <property type="match status" value="1"/>
</dbReference>
<dbReference type="InterPro" id="IPR008181">
    <property type="entry name" value="dUTPase"/>
</dbReference>
<dbReference type="InterPro" id="IPR029054">
    <property type="entry name" value="dUTPase-like"/>
</dbReference>
<dbReference type="InterPro" id="IPR036157">
    <property type="entry name" value="dUTPase-like_sf"/>
</dbReference>
<dbReference type="InterPro" id="IPR033704">
    <property type="entry name" value="dUTPase_trimeric"/>
</dbReference>
<dbReference type="NCBIfam" id="TIGR00576">
    <property type="entry name" value="dut"/>
    <property type="match status" value="1"/>
</dbReference>
<dbReference type="NCBIfam" id="NF001862">
    <property type="entry name" value="PRK00601.1"/>
    <property type="match status" value="1"/>
</dbReference>
<dbReference type="PANTHER" id="PTHR11241">
    <property type="entry name" value="DEOXYURIDINE 5'-TRIPHOSPHATE NUCLEOTIDOHYDROLASE"/>
    <property type="match status" value="1"/>
</dbReference>
<dbReference type="PANTHER" id="PTHR11241:SF0">
    <property type="entry name" value="DEOXYURIDINE 5'-TRIPHOSPHATE NUCLEOTIDOHYDROLASE"/>
    <property type="match status" value="1"/>
</dbReference>
<dbReference type="Pfam" id="PF00692">
    <property type="entry name" value="dUTPase"/>
    <property type="match status" value="1"/>
</dbReference>
<dbReference type="SUPFAM" id="SSF51283">
    <property type="entry name" value="dUTPase-like"/>
    <property type="match status" value="1"/>
</dbReference>
<gene>
    <name evidence="1" type="primary">dut</name>
    <name type="ordered locus">BH14690</name>
</gene>
<feature type="chain" id="PRO_0000182827" description="Deoxyuridine 5'-triphosphate nucleotidohydrolase">
    <location>
        <begin position="1"/>
        <end position="184"/>
    </location>
</feature>
<feature type="region of interest" description="Disordered" evidence="2">
    <location>
        <begin position="1"/>
        <end position="25"/>
    </location>
</feature>
<feature type="region of interest" description="Disordered" evidence="2">
    <location>
        <begin position="165"/>
        <end position="184"/>
    </location>
</feature>
<feature type="compositionally biased region" description="Polar residues" evidence="2">
    <location>
        <begin position="1"/>
        <end position="16"/>
    </location>
</feature>
<feature type="compositionally biased region" description="Gly residues" evidence="2">
    <location>
        <begin position="173"/>
        <end position="184"/>
    </location>
</feature>
<feature type="binding site" evidence="1">
    <location>
        <begin position="96"/>
        <end position="98"/>
    </location>
    <ligand>
        <name>substrate</name>
    </ligand>
</feature>
<feature type="binding site" evidence="1">
    <location>
        <position position="109"/>
    </location>
    <ligand>
        <name>substrate</name>
    </ligand>
</feature>
<feature type="binding site" evidence="1">
    <location>
        <begin position="113"/>
        <end position="115"/>
    </location>
    <ligand>
        <name>substrate</name>
    </ligand>
</feature>
<feature type="binding site" evidence="1">
    <location>
        <position position="123"/>
    </location>
    <ligand>
        <name>substrate</name>
    </ligand>
</feature>
<protein>
    <recommendedName>
        <fullName evidence="1">Deoxyuridine 5'-triphosphate nucleotidohydrolase</fullName>
        <shortName evidence="1">dUTPase</shortName>
        <ecNumber evidence="1">3.6.1.23</ecNumber>
    </recommendedName>
    <alternativeName>
        <fullName evidence="1">dUTP pyrophosphatase</fullName>
    </alternativeName>
</protein>
<sequence length="184" mass="19660">MPHTQTDAHQNNQENFSSSLISSRPSQPMTLSIQRLDHGQGLELPHYATAGSAGLDLRAALSEEETVILAPGQRALIPTGLIFHLSPGFEAQIRPRSGLALKHGITCLNTPGTIDSDYRGEVKVLLINCGQEDFAIKRGMRIAQTVIAPVLQVNVCALEPQQNESTKNTVGNRGAGGFGSTGHD</sequence>
<accession>Q6G202</accession>
<reference key="1">
    <citation type="journal article" date="2004" name="Proc. Natl. Acad. Sci. U.S.A.">
        <title>The louse-borne human pathogen Bartonella quintana is a genomic derivative of the zoonotic agent Bartonella henselae.</title>
        <authorList>
            <person name="Alsmark U.C.M."/>
            <person name="Frank A.C."/>
            <person name="Karlberg E.O."/>
            <person name="Legault B.-A."/>
            <person name="Ardell D.H."/>
            <person name="Canbaeck B."/>
            <person name="Eriksson A.-S."/>
            <person name="Naeslund A.K."/>
            <person name="Handley S.A."/>
            <person name="Huvet M."/>
            <person name="La Scola B."/>
            <person name="Holmberg M."/>
            <person name="Andersson S.G.E."/>
        </authorList>
    </citation>
    <scope>NUCLEOTIDE SEQUENCE [LARGE SCALE GENOMIC DNA]</scope>
    <source>
        <strain>ATCC 49882 / DSM 28221 / CCUG 30454 / Houston 1</strain>
    </source>
</reference>